<reference key="1">
    <citation type="journal article" date="1993" name="Cell">
        <title>Sex determination gene TASSELSEED2 of maize encodes a short-chain alcohol dehydrogenase required for stage-specific floral organ abortion.</title>
        <authorList>
            <person name="Delong A."/>
            <person name="Calderon-Urrea A."/>
            <person name="Dellaporta S.L."/>
        </authorList>
    </citation>
    <scope>NUCLEOTIDE SEQUENCE [MRNA]</scope>
    <source>
        <strain>cv. Wisconsin 22</strain>
    </source>
</reference>
<protein>
    <recommendedName>
        <fullName>Sex determination protein tasselseed-2</fullName>
    </recommendedName>
</protein>
<feature type="chain" id="PRO_0000054790" description="Sex determination protein tasselseed-2">
    <location>
        <begin position="1"/>
        <end position="336"/>
    </location>
</feature>
<feature type="active site" description="Proton acceptor" evidence="1">
    <location>
        <position position="207"/>
    </location>
</feature>
<feature type="binding site" evidence="1">
    <location>
        <begin position="59"/>
        <end position="83"/>
    </location>
    <ligand>
        <name>NAD(+)</name>
        <dbReference type="ChEBI" id="CHEBI:57540"/>
    </ligand>
</feature>
<feature type="binding site" evidence="1">
    <location>
        <position position="194"/>
    </location>
    <ligand>
        <name>substrate</name>
    </ligand>
</feature>
<dbReference type="EMBL" id="L20621">
    <property type="protein sequence ID" value="AAC37345.1"/>
    <property type="molecule type" value="mRNA"/>
</dbReference>
<dbReference type="PIR" id="A47542">
    <property type="entry name" value="A47542"/>
</dbReference>
<dbReference type="RefSeq" id="NP_001105322.1">
    <property type="nucleotide sequence ID" value="NM_001111852.1"/>
</dbReference>
<dbReference type="SMR" id="P50160"/>
<dbReference type="FunCoup" id="P50160">
    <property type="interactions" value="46"/>
</dbReference>
<dbReference type="STRING" id="4577.P50160"/>
<dbReference type="PaxDb" id="4577-GRMZM2G455809_P01"/>
<dbReference type="GeneID" id="542246"/>
<dbReference type="KEGG" id="zma:542246"/>
<dbReference type="MaizeGDB" id="56963"/>
<dbReference type="eggNOG" id="KOG0725">
    <property type="taxonomic scope" value="Eukaryota"/>
</dbReference>
<dbReference type="InParanoid" id="P50160"/>
<dbReference type="OrthoDB" id="294295at2759"/>
<dbReference type="Proteomes" id="UP000007305">
    <property type="component" value="Unplaced"/>
</dbReference>
<dbReference type="ExpressionAtlas" id="P50160">
    <property type="expression patterns" value="differential"/>
</dbReference>
<dbReference type="GO" id="GO:0016616">
    <property type="term" value="F:oxidoreductase activity, acting on the CH-OH group of donors, NAD or NADP as acceptor"/>
    <property type="evidence" value="ECO:0007669"/>
    <property type="project" value="InterPro"/>
</dbReference>
<dbReference type="CDD" id="cd05326">
    <property type="entry name" value="secoisolariciresinol-DH_like_SDR_c"/>
    <property type="match status" value="1"/>
</dbReference>
<dbReference type="FunFam" id="3.40.50.720:FF:000084">
    <property type="entry name" value="Short-chain dehydrogenase reductase"/>
    <property type="match status" value="1"/>
</dbReference>
<dbReference type="Gene3D" id="3.40.50.720">
    <property type="entry name" value="NAD(P)-binding Rossmann-like Domain"/>
    <property type="match status" value="1"/>
</dbReference>
<dbReference type="InterPro" id="IPR045309">
    <property type="entry name" value="ABA2-like"/>
</dbReference>
<dbReference type="InterPro" id="IPR036291">
    <property type="entry name" value="NAD(P)-bd_dom_sf"/>
</dbReference>
<dbReference type="InterPro" id="IPR002347">
    <property type="entry name" value="SDR_fam"/>
</dbReference>
<dbReference type="PANTHER" id="PTHR43180">
    <property type="entry name" value="3-OXOACYL-(ACYL-CARRIER-PROTEIN) REDUCTASE (AFU_ORTHOLOGUE AFUA_6G11210)"/>
    <property type="match status" value="1"/>
</dbReference>
<dbReference type="PANTHER" id="PTHR43180:SF44">
    <property type="entry name" value="SEX DETERMINATION PROTEIN TASSELSEED-2"/>
    <property type="match status" value="1"/>
</dbReference>
<dbReference type="Pfam" id="PF00106">
    <property type="entry name" value="adh_short"/>
    <property type="match status" value="1"/>
</dbReference>
<dbReference type="Pfam" id="PF13561">
    <property type="entry name" value="adh_short_C2"/>
    <property type="match status" value="1"/>
</dbReference>
<dbReference type="PRINTS" id="PR00081">
    <property type="entry name" value="GDHRDH"/>
</dbReference>
<dbReference type="PRINTS" id="PR00080">
    <property type="entry name" value="SDRFAMILY"/>
</dbReference>
<dbReference type="SUPFAM" id="SSF51735">
    <property type="entry name" value="NAD(P)-binding Rossmann-fold domains"/>
    <property type="match status" value="1"/>
</dbReference>
<sequence>MHASLASYAAAAMPALDLRPEIAHAHQPVMSPSHHGWDGNGATAVPTPMPKRLDGKVAIVTGGARGIGEAIVRLFAKHGARVVIADIDDAAGEALASALGPQVSFVRCDVSVEDDVRRAVDWALSRHGGRLDVYCNNAGVLGRQTRAARSILSFDAAEFDRVLRVNALGAALGMKHAARAMAPRRAGSIVSVASVAAVLGGLGPHAYTASKHAIVGLTKNAACELRAHGVRVNCVSPFGVATPMLINAWRQGHDDATADADRDLDLDLDVTVPSDQEVEKMEEVVRGLATLKGPTLRPRDIAEAVLFLASDEARYISGHNLVVDGGVTTSRNLIGL</sequence>
<gene>
    <name type="primary">TS2</name>
</gene>
<accession>P50160</accession>
<organism>
    <name type="scientific">Zea mays</name>
    <name type="common">Maize</name>
    <dbReference type="NCBI Taxonomy" id="4577"/>
    <lineage>
        <taxon>Eukaryota</taxon>
        <taxon>Viridiplantae</taxon>
        <taxon>Streptophyta</taxon>
        <taxon>Embryophyta</taxon>
        <taxon>Tracheophyta</taxon>
        <taxon>Spermatophyta</taxon>
        <taxon>Magnoliopsida</taxon>
        <taxon>Liliopsida</taxon>
        <taxon>Poales</taxon>
        <taxon>Poaceae</taxon>
        <taxon>PACMAD clade</taxon>
        <taxon>Panicoideae</taxon>
        <taxon>Andropogonodae</taxon>
        <taxon>Andropogoneae</taxon>
        <taxon>Tripsacinae</taxon>
        <taxon>Zea</taxon>
    </lineage>
</organism>
<evidence type="ECO:0000250" key="1"/>
<evidence type="ECO:0000305" key="2"/>
<keyword id="KW-0217">Developmental protein</keyword>
<keyword id="KW-0560">Oxidoreductase</keyword>
<keyword id="KW-1185">Reference proteome</keyword>
<proteinExistence type="evidence at transcript level"/>
<name>TS2_MAIZE</name>
<comment type="function">
    <text>Required for stage-specific floral organ abortion.</text>
</comment>
<comment type="similarity">
    <text evidence="2">Belongs to the short-chain dehydrogenases/reductases (SDR) family.</text>
</comment>